<sequence>MAAKDVIFGGEARARMVEGVNILANAVKVTLGPKGRNVVLERSFGAPTVTKDGVSVAKEIELKDKLQNMGAQMVKEVASKTSDIAGDGTTTATVLAQAIVHEGMKYVAAGMNPMDLKRGIDKAVHALVEELKKASKATTTSKEIAQVGSISANSDETIGKIIADAMDKVGKEGVITVEDGKSLESELDVVEGMQFDRGYLSPYFINNPEKQSALLDNPFVLLYDKKISNIRDLLPTLEQVAKAGRPLLIIAEEVEGEALATLVVNTLRGILKVVAVKAPGFGDRRKAMLEDIAVLTGGKVIAEEVGMSLEKVTLADLGQAKRIEVGKENTIIIDGSGEAADIEARVKQVRVQIEEATSDYDREKLQERVAKLAGGVAVIKVGAATEVEMKEKKARVEDALHATRAAVEEGIVAGGGVALLRAKQTAGVIKGDNADQDAGIKLVLRAIEAPLREIVYNAGGEASVVVNAVLAGTGNYGFNAANDTYGDMIEMGILDPTKVTRTALQNAASVASLMLTTECMVCESAKDDAPAGGMGGGMGGMGGMGDMGM</sequence>
<feature type="chain" id="PRO_0000332037" description="Chaperonin GroEL 2">
    <location>
        <begin position="1"/>
        <end position="549"/>
    </location>
</feature>
<feature type="binding site" evidence="1">
    <location>
        <begin position="30"/>
        <end position="33"/>
    </location>
    <ligand>
        <name>ATP</name>
        <dbReference type="ChEBI" id="CHEBI:30616"/>
    </ligand>
</feature>
<feature type="binding site" evidence="1">
    <location>
        <position position="51"/>
    </location>
    <ligand>
        <name>ATP</name>
        <dbReference type="ChEBI" id="CHEBI:30616"/>
    </ligand>
</feature>
<feature type="binding site" evidence="1">
    <location>
        <begin position="87"/>
        <end position="91"/>
    </location>
    <ligand>
        <name>ATP</name>
        <dbReference type="ChEBI" id="CHEBI:30616"/>
    </ligand>
</feature>
<feature type="binding site" evidence="1">
    <location>
        <position position="415"/>
    </location>
    <ligand>
        <name>ATP</name>
        <dbReference type="ChEBI" id="CHEBI:30616"/>
    </ligand>
</feature>
<feature type="binding site" evidence="1">
    <location>
        <begin position="479"/>
        <end position="481"/>
    </location>
    <ligand>
        <name>ATP</name>
        <dbReference type="ChEBI" id="CHEBI:30616"/>
    </ligand>
</feature>
<feature type="binding site" evidence="1">
    <location>
        <position position="495"/>
    </location>
    <ligand>
        <name>ATP</name>
        <dbReference type="ChEBI" id="CHEBI:30616"/>
    </ligand>
</feature>
<comment type="function">
    <text evidence="1">Together with its co-chaperonin GroES, plays an essential role in assisting protein folding. The GroEL-GroES system forms a nano-cage that allows encapsulation of the non-native substrate proteins and provides a physical environment optimized to promote and accelerate protein folding.</text>
</comment>
<comment type="catalytic activity">
    <reaction evidence="1">
        <text>ATP + H2O + a folded polypeptide = ADP + phosphate + an unfolded polypeptide.</text>
        <dbReference type="EC" id="5.6.1.7"/>
    </reaction>
</comment>
<comment type="subunit">
    <text evidence="1">Forms a cylinder of 14 subunits composed of two heptameric rings stacked back-to-back. Interacts with the co-chaperonin GroES.</text>
</comment>
<comment type="subcellular location">
    <subcellularLocation>
        <location evidence="1">Cytoplasm</location>
    </subcellularLocation>
</comment>
<comment type="similarity">
    <text evidence="1">Belongs to the chaperonin (HSP60) family.</text>
</comment>
<reference key="1">
    <citation type="journal article" date="2009" name="Environ. Microbiol.">
        <title>The genome of Polaromonas naphthalenivorans strain CJ2, isolated from coal tar-contaminated sediment, reveals physiological and metabolic versatility and evolution through extensive horizontal gene transfer.</title>
        <authorList>
            <person name="Yagi J.M."/>
            <person name="Sims D."/>
            <person name="Brettin T."/>
            <person name="Bruce D."/>
            <person name="Madsen E.L."/>
        </authorList>
    </citation>
    <scope>NUCLEOTIDE SEQUENCE [LARGE SCALE GENOMIC DNA]</scope>
    <source>
        <strain>CJ2</strain>
    </source>
</reference>
<name>CH602_POLNA</name>
<gene>
    <name evidence="1" type="primary">groEL2</name>
    <name evidence="1" type="synonym">groL2</name>
    <name type="ordered locus">Pnap_0657</name>
</gene>
<dbReference type="EC" id="5.6.1.7" evidence="1"/>
<dbReference type="EMBL" id="CP000529">
    <property type="protein sequence ID" value="ABM35976.1"/>
    <property type="molecule type" value="Genomic_DNA"/>
</dbReference>
<dbReference type="SMR" id="A1VJZ8"/>
<dbReference type="STRING" id="365044.Pnap_0657"/>
<dbReference type="KEGG" id="pna:Pnap_0657"/>
<dbReference type="eggNOG" id="COG0459">
    <property type="taxonomic scope" value="Bacteria"/>
</dbReference>
<dbReference type="HOGENOM" id="CLU_016503_3_0_4"/>
<dbReference type="OrthoDB" id="9766614at2"/>
<dbReference type="Proteomes" id="UP000000644">
    <property type="component" value="Chromosome"/>
</dbReference>
<dbReference type="GO" id="GO:0005737">
    <property type="term" value="C:cytoplasm"/>
    <property type="evidence" value="ECO:0007669"/>
    <property type="project" value="UniProtKB-SubCell"/>
</dbReference>
<dbReference type="GO" id="GO:0005524">
    <property type="term" value="F:ATP binding"/>
    <property type="evidence" value="ECO:0007669"/>
    <property type="project" value="UniProtKB-UniRule"/>
</dbReference>
<dbReference type="GO" id="GO:0140662">
    <property type="term" value="F:ATP-dependent protein folding chaperone"/>
    <property type="evidence" value="ECO:0007669"/>
    <property type="project" value="InterPro"/>
</dbReference>
<dbReference type="GO" id="GO:0016853">
    <property type="term" value="F:isomerase activity"/>
    <property type="evidence" value="ECO:0007669"/>
    <property type="project" value="UniProtKB-KW"/>
</dbReference>
<dbReference type="GO" id="GO:0051082">
    <property type="term" value="F:unfolded protein binding"/>
    <property type="evidence" value="ECO:0007669"/>
    <property type="project" value="UniProtKB-UniRule"/>
</dbReference>
<dbReference type="GO" id="GO:0042026">
    <property type="term" value="P:protein refolding"/>
    <property type="evidence" value="ECO:0007669"/>
    <property type="project" value="UniProtKB-UniRule"/>
</dbReference>
<dbReference type="CDD" id="cd03344">
    <property type="entry name" value="GroEL"/>
    <property type="match status" value="1"/>
</dbReference>
<dbReference type="FunFam" id="1.10.560.10:FF:000001">
    <property type="entry name" value="60 kDa chaperonin"/>
    <property type="match status" value="1"/>
</dbReference>
<dbReference type="FunFam" id="3.50.7.10:FF:000001">
    <property type="entry name" value="60 kDa chaperonin"/>
    <property type="match status" value="1"/>
</dbReference>
<dbReference type="Gene3D" id="3.50.7.10">
    <property type="entry name" value="GroEL"/>
    <property type="match status" value="1"/>
</dbReference>
<dbReference type="Gene3D" id="1.10.560.10">
    <property type="entry name" value="GroEL-like equatorial domain"/>
    <property type="match status" value="1"/>
</dbReference>
<dbReference type="Gene3D" id="3.30.260.10">
    <property type="entry name" value="TCP-1-like chaperonin intermediate domain"/>
    <property type="match status" value="1"/>
</dbReference>
<dbReference type="HAMAP" id="MF_00600">
    <property type="entry name" value="CH60"/>
    <property type="match status" value="1"/>
</dbReference>
<dbReference type="InterPro" id="IPR018370">
    <property type="entry name" value="Chaperonin_Cpn60_CS"/>
</dbReference>
<dbReference type="InterPro" id="IPR001844">
    <property type="entry name" value="Cpn60/GroEL"/>
</dbReference>
<dbReference type="InterPro" id="IPR002423">
    <property type="entry name" value="Cpn60/GroEL/TCP-1"/>
</dbReference>
<dbReference type="InterPro" id="IPR027409">
    <property type="entry name" value="GroEL-like_apical_dom_sf"/>
</dbReference>
<dbReference type="InterPro" id="IPR027413">
    <property type="entry name" value="GROEL-like_equatorial_sf"/>
</dbReference>
<dbReference type="InterPro" id="IPR027410">
    <property type="entry name" value="TCP-1-like_intermed_sf"/>
</dbReference>
<dbReference type="NCBIfam" id="TIGR02348">
    <property type="entry name" value="GroEL"/>
    <property type="match status" value="1"/>
</dbReference>
<dbReference type="NCBIfam" id="NF000592">
    <property type="entry name" value="PRK00013.1"/>
    <property type="match status" value="1"/>
</dbReference>
<dbReference type="NCBIfam" id="NF009487">
    <property type="entry name" value="PRK12849.1"/>
    <property type="match status" value="1"/>
</dbReference>
<dbReference type="NCBIfam" id="NF009488">
    <property type="entry name" value="PRK12850.1"/>
    <property type="match status" value="1"/>
</dbReference>
<dbReference type="NCBIfam" id="NF009489">
    <property type="entry name" value="PRK12851.1"/>
    <property type="match status" value="1"/>
</dbReference>
<dbReference type="PANTHER" id="PTHR45633">
    <property type="entry name" value="60 KDA HEAT SHOCK PROTEIN, MITOCHONDRIAL"/>
    <property type="match status" value="1"/>
</dbReference>
<dbReference type="Pfam" id="PF00118">
    <property type="entry name" value="Cpn60_TCP1"/>
    <property type="match status" value="1"/>
</dbReference>
<dbReference type="PRINTS" id="PR00298">
    <property type="entry name" value="CHAPERONIN60"/>
</dbReference>
<dbReference type="SUPFAM" id="SSF52029">
    <property type="entry name" value="GroEL apical domain-like"/>
    <property type="match status" value="1"/>
</dbReference>
<dbReference type="SUPFAM" id="SSF48592">
    <property type="entry name" value="GroEL equatorial domain-like"/>
    <property type="match status" value="1"/>
</dbReference>
<dbReference type="SUPFAM" id="SSF54849">
    <property type="entry name" value="GroEL-intermediate domain like"/>
    <property type="match status" value="1"/>
</dbReference>
<dbReference type="PROSITE" id="PS00296">
    <property type="entry name" value="CHAPERONINS_CPN60"/>
    <property type="match status" value="1"/>
</dbReference>
<proteinExistence type="inferred from homology"/>
<protein>
    <recommendedName>
        <fullName evidence="1">Chaperonin GroEL 2</fullName>
        <ecNumber evidence="1">5.6.1.7</ecNumber>
    </recommendedName>
    <alternativeName>
        <fullName evidence="1">60 kDa chaperonin 2</fullName>
    </alternativeName>
    <alternativeName>
        <fullName evidence="1">Chaperonin-60 2</fullName>
        <shortName evidence="1">Cpn60 2</shortName>
    </alternativeName>
</protein>
<accession>A1VJZ8</accession>
<evidence type="ECO:0000255" key="1">
    <source>
        <dbReference type="HAMAP-Rule" id="MF_00600"/>
    </source>
</evidence>
<organism>
    <name type="scientific">Polaromonas naphthalenivorans (strain CJ2)</name>
    <dbReference type="NCBI Taxonomy" id="365044"/>
    <lineage>
        <taxon>Bacteria</taxon>
        <taxon>Pseudomonadati</taxon>
        <taxon>Pseudomonadota</taxon>
        <taxon>Betaproteobacteria</taxon>
        <taxon>Burkholderiales</taxon>
        <taxon>Comamonadaceae</taxon>
        <taxon>Polaromonas</taxon>
    </lineage>
</organism>
<keyword id="KW-0067">ATP-binding</keyword>
<keyword id="KW-0143">Chaperone</keyword>
<keyword id="KW-0963">Cytoplasm</keyword>
<keyword id="KW-0413">Isomerase</keyword>
<keyword id="KW-0547">Nucleotide-binding</keyword>
<keyword id="KW-1185">Reference proteome</keyword>